<evidence type="ECO:0000250" key="1">
    <source>
        <dbReference type="UniProtKB" id="Q9BZL1"/>
    </source>
</evidence>
<proteinExistence type="inferred from homology"/>
<protein>
    <recommendedName>
        <fullName>Ubiquitin-like protein 5</fullName>
    </recommendedName>
</protein>
<dbReference type="EMBL" id="BC102198">
    <property type="protein sequence ID" value="AAI02199.1"/>
    <property type="molecule type" value="mRNA"/>
</dbReference>
<dbReference type="RefSeq" id="NP_001032799.1">
    <property type="nucleotide sequence ID" value="NM_001037710.2"/>
</dbReference>
<dbReference type="RefSeq" id="XP_015320442.1">
    <property type="nucleotide sequence ID" value="XM_015464956.3"/>
</dbReference>
<dbReference type="BMRB" id="Q3T0Z3"/>
<dbReference type="SMR" id="Q3T0Z3"/>
<dbReference type="FunCoup" id="Q3T0Z3">
    <property type="interactions" value="2315"/>
</dbReference>
<dbReference type="STRING" id="9913.ENSBTAP00000063290"/>
<dbReference type="PaxDb" id="9913-ENSBTAP00000054514"/>
<dbReference type="Ensembl" id="ENSBTAT00000068472.1">
    <property type="protein sequence ID" value="ENSBTAP00000063290.1"/>
    <property type="gene ID" value="ENSBTAG00000049452.2"/>
</dbReference>
<dbReference type="GeneID" id="614551"/>
<dbReference type="KEGG" id="bta:614551"/>
<dbReference type="CTD" id="59286"/>
<dbReference type="VEuPathDB" id="HostDB:ENSBTAG00000049452"/>
<dbReference type="eggNOG" id="KOG3493">
    <property type="taxonomic scope" value="Eukaryota"/>
</dbReference>
<dbReference type="GeneTree" id="ENSGT00390000001945"/>
<dbReference type="InParanoid" id="Q3T0Z3"/>
<dbReference type="OMA" id="GMSLEMQ"/>
<dbReference type="OrthoDB" id="3881at2759"/>
<dbReference type="Reactome" id="R-BTA-72163">
    <property type="pathway name" value="mRNA Splicing - Major Pathway"/>
</dbReference>
<dbReference type="Proteomes" id="UP000009136">
    <property type="component" value="Chromosome 7"/>
</dbReference>
<dbReference type="Bgee" id="ENSBTAG00000049452">
    <property type="expression patterns" value="Expressed in adenohypophysis and 101 other cell types or tissues"/>
</dbReference>
<dbReference type="GO" id="GO:0005737">
    <property type="term" value="C:cytoplasm"/>
    <property type="evidence" value="ECO:0000318"/>
    <property type="project" value="GO_Central"/>
</dbReference>
<dbReference type="GO" id="GO:0005634">
    <property type="term" value="C:nucleus"/>
    <property type="evidence" value="ECO:0000318"/>
    <property type="project" value="GO_Central"/>
</dbReference>
<dbReference type="GO" id="GO:0031386">
    <property type="term" value="F:protein tag activity"/>
    <property type="evidence" value="ECO:0000318"/>
    <property type="project" value="GO_Central"/>
</dbReference>
<dbReference type="GO" id="GO:0000398">
    <property type="term" value="P:mRNA splicing, via spliceosome"/>
    <property type="evidence" value="ECO:0000318"/>
    <property type="project" value="GO_Central"/>
</dbReference>
<dbReference type="GO" id="GO:0036211">
    <property type="term" value="P:protein modification process"/>
    <property type="evidence" value="ECO:0000318"/>
    <property type="project" value="GO_Central"/>
</dbReference>
<dbReference type="CDD" id="cd01791">
    <property type="entry name" value="Ubl_UBL5"/>
    <property type="match status" value="1"/>
</dbReference>
<dbReference type="FunFam" id="3.10.20.90:FF:000052">
    <property type="entry name" value="Ubiquitin-like protein 5"/>
    <property type="match status" value="1"/>
</dbReference>
<dbReference type="Gene3D" id="3.10.20.90">
    <property type="entry name" value="Phosphatidylinositol 3-kinase Catalytic Subunit, Chain A, domain 1"/>
    <property type="match status" value="1"/>
</dbReference>
<dbReference type="InterPro" id="IPR039732">
    <property type="entry name" value="Hub1/Ubl5"/>
</dbReference>
<dbReference type="InterPro" id="IPR000626">
    <property type="entry name" value="Ubiquitin-like_dom"/>
</dbReference>
<dbReference type="InterPro" id="IPR029071">
    <property type="entry name" value="Ubiquitin-like_domsf"/>
</dbReference>
<dbReference type="PANTHER" id="PTHR13042">
    <property type="entry name" value="UBIQUITIN-LIKE PROTEIN 5"/>
    <property type="match status" value="1"/>
</dbReference>
<dbReference type="Pfam" id="PF00240">
    <property type="entry name" value="ubiquitin"/>
    <property type="match status" value="1"/>
</dbReference>
<dbReference type="SUPFAM" id="SSF54236">
    <property type="entry name" value="Ubiquitin-like"/>
    <property type="match status" value="1"/>
</dbReference>
<feature type="chain" id="PRO_0000253720" description="Ubiquitin-like protein 5">
    <location>
        <begin position="1"/>
        <end position="73"/>
    </location>
</feature>
<feature type="domain" description="Ubiquitin-like">
    <location>
        <begin position="1"/>
        <end position="73"/>
    </location>
</feature>
<comment type="function">
    <text evidence="1">Ubiquitin-like protein that plays a role in cell proliferation and sister chromatid cohesion by associating with spliceosomal proteins. Participates thereby in pre-mRNA splicing by maintaining spliceosome integrity. Promotes the functional integrity of the Fanconi anemia DNA repair pathway by interacting with FANCI component and subsequently mediating the formation of FANCI homodimers. Also plays a protective role against ER stress-induced apoptosis.</text>
</comment>
<comment type="subunit">
    <text evidence="1">Interacts with CLK1, CLK3 and CLK4. Interacts with coilin/COIL. Interacts with spliceosome components SART1 and EFTUD2. Interacts with FANCI; this interaction promotes FANCI dimerization.</text>
</comment>
<comment type="subcellular location">
    <subcellularLocation>
        <location evidence="1">Cytoplasm</location>
    </subcellularLocation>
    <subcellularLocation>
        <location evidence="1">Nucleus</location>
    </subcellularLocation>
</comment>
<reference key="1">
    <citation type="submission" date="2005-08" db="EMBL/GenBank/DDBJ databases">
        <authorList>
            <consortium name="NIH - Mammalian Gene Collection (MGC) project"/>
        </authorList>
    </citation>
    <scope>NUCLEOTIDE SEQUENCE [LARGE SCALE MRNA]</scope>
    <source>
        <strain>Crossbred X Angus</strain>
        <tissue>Ileum</tissue>
    </source>
</reference>
<sequence>MIEVVCNDRLGKKVRVKCNTDDTIGDLKKLIAAQTGTRWNKIVLKKWYTIFKDHVSLGDYEIHDGMNLELYYQ</sequence>
<gene>
    <name type="primary">UBL5</name>
</gene>
<accession>Q3T0Z3</accession>
<keyword id="KW-0963">Cytoplasm</keyword>
<keyword id="KW-0539">Nucleus</keyword>
<keyword id="KW-1185">Reference proteome</keyword>
<keyword id="KW-0833">Ubl conjugation pathway</keyword>
<organism>
    <name type="scientific">Bos taurus</name>
    <name type="common">Bovine</name>
    <dbReference type="NCBI Taxonomy" id="9913"/>
    <lineage>
        <taxon>Eukaryota</taxon>
        <taxon>Metazoa</taxon>
        <taxon>Chordata</taxon>
        <taxon>Craniata</taxon>
        <taxon>Vertebrata</taxon>
        <taxon>Euteleostomi</taxon>
        <taxon>Mammalia</taxon>
        <taxon>Eutheria</taxon>
        <taxon>Laurasiatheria</taxon>
        <taxon>Artiodactyla</taxon>
        <taxon>Ruminantia</taxon>
        <taxon>Pecora</taxon>
        <taxon>Bovidae</taxon>
        <taxon>Bovinae</taxon>
        <taxon>Bos</taxon>
    </lineage>
</organism>
<name>UBL5_BOVIN</name>